<protein>
    <recommendedName>
        <fullName>Acidic phospholipase A2 6</fullName>
        <shortName>svPLA2</shortName>
        <ecNumber>3.1.1.4</ecNumber>
    </recommendedName>
    <alternativeName>
        <fullName>Phosphatidylcholine 2-acylhydrolase</fullName>
    </alternativeName>
    <alternativeName>
        <fullName>Phospholipase A2 isozyme VI</fullName>
        <shortName>PLA2-VI</shortName>
    </alternativeName>
</protein>
<sequence>MRTLWIMAVLLVGVEGHLMQFENMIKKVTGRSGIWWYGSYGCYCGKGGQGLPQDASDRCCFVHDCCYGKVNGCDPKDDFYVYSSENRDIVCGEDNPCTKEICECDKAAAICFRDNMDTYQNKYWFYPSSNCNEESEPC</sequence>
<evidence type="ECO:0000250" key="1"/>
<evidence type="ECO:0000255" key="2">
    <source>
        <dbReference type="PROSITE-ProRule" id="PRU10035"/>
    </source>
</evidence>
<evidence type="ECO:0000255" key="3">
    <source>
        <dbReference type="PROSITE-ProRule" id="PRU10036"/>
    </source>
</evidence>
<evidence type="ECO:0000305" key="4"/>
<name>PA2A6_CRAGM</name>
<reference key="1">
    <citation type="journal article" date="1995" name="Proc. Natl. Acad. Sci. U.S.A.">
        <title>Accelerated evolution in the protein-coding regions is universal in crotalinae snake venom gland phospholipase A2 isozyme genes.</title>
        <authorList>
            <person name="Nakashima K."/>
            <person name="Nobuhisa I."/>
            <person name="Deshimaru M."/>
            <person name="Nakai M."/>
            <person name="Ogawa T."/>
            <person name="Shimohigashi Y."/>
            <person name="Fukumaki Y."/>
            <person name="Hattori M."/>
            <person name="Sakaki Y."/>
            <person name="Hattori S."/>
            <person name="Ohno M."/>
        </authorList>
    </citation>
    <scope>NUCLEOTIDE SEQUENCE [GENOMIC DNA]</scope>
    <source>
        <tissue>Venom gland</tissue>
    </source>
</reference>
<keyword id="KW-0106">Calcium</keyword>
<keyword id="KW-1015">Disulfide bond</keyword>
<keyword id="KW-0378">Hydrolase</keyword>
<keyword id="KW-0442">Lipid degradation</keyword>
<keyword id="KW-0443">Lipid metabolism</keyword>
<keyword id="KW-0479">Metal-binding</keyword>
<keyword id="KW-0964">Secreted</keyword>
<keyword id="KW-0732">Signal</keyword>
<accession>P70088</accession>
<feature type="signal peptide" evidence="1">
    <location>
        <begin position="1"/>
        <end position="16"/>
    </location>
</feature>
<feature type="chain" id="PRO_0000022961" description="Acidic phospholipase A2 6">
    <location>
        <begin position="17"/>
        <end position="138"/>
    </location>
</feature>
<feature type="active site" evidence="1">
    <location>
        <position position="63"/>
    </location>
</feature>
<feature type="active site" evidence="1">
    <location>
        <position position="105"/>
    </location>
</feature>
<feature type="binding site" evidence="1">
    <location>
        <position position="43"/>
    </location>
    <ligand>
        <name>Ca(2+)</name>
        <dbReference type="ChEBI" id="CHEBI:29108"/>
    </ligand>
</feature>
<feature type="binding site" evidence="1">
    <location>
        <position position="45"/>
    </location>
    <ligand>
        <name>Ca(2+)</name>
        <dbReference type="ChEBI" id="CHEBI:29108"/>
    </ligand>
</feature>
<feature type="binding site" evidence="1">
    <location>
        <position position="47"/>
    </location>
    <ligand>
        <name>Ca(2+)</name>
        <dbReference type="ChEBI" id="CHEBI:29108"/>
    </ligand>
</feature>
<feature type="binding site" evidence="1">
    <location>
        <position position="64"/>
    </location>
    <ligand>
        <name>Ca(2+)</name>
        <dbReference type="ChEBI" id="CHEBI:29108"/>
    </ligand>
</feature>
<feature type="disulfide bond" evidence="1">
    <location>
        <begin position="42"/>
        <end position="131"/>
    </location>
</feature>
<feature type="disulfide bond" evidence="1">
    <location>
        <begin position="44"/>
        <end position="60"/>
    </location>
</feature>
<feature type="disulfide bond" evidence="1">
    <location>
        <begin position="59"/>
        <end position="111"/>
    </location>
</feature>
<feature type="disulfide bond" evidence="1">
    <location>
        <begin position="65"/>
        <end position="138"/>
    </location>
</feature>
<feature type="disulfide bond" evidence="1">
    <location>
        <begin position="66"/>
        <end position="104"/>
    </location>
</feature>
<feature type="disulfide bond" evidence="1">
    <location>
        <begin position="73"/>
        <end position="97"/>
    </location>
</feature>
<feature type="disulfide bond" evidence="1">
    <location>
        <begin position="91"/>
        <end position="102"/>
    </location>
</feature>
<dbReference type="EC" id="3.1.1.4"/>
<dbReference type="EMBL" id="D31778">
    <property type="protein sequence ID" value="BAA06556.1"/>
    <property type="molecule type" value="Genomic_DNA"/>
</dbReference>
<dbReference type="SMR" id="P70088"/>
<dbReference type="GO" id="GO:0005576">
    <property type="term" value="C:extracellular region"/>
    <property type="evidence" value="ECO:0007669"/>
    <property type="project" value="UniProtKB-SubCell"/>
</dbReference>
<dbReference type="GO" id="GO:0005509">
    <property type="term" value="F:calcium ion binding"/>
    <property type="evidence" value="ECO:0007669"/>
    <property type="project" value="InterPro"/>
</dbReference>
<dbReference type="GO" id="GO:0047498">
    <property type="term" value="F:calcium-dependent phospholipase A2 activity"/>
    <property type="evidence" value="ECO:0007669"/>
    <property type="project" value="TreeGrafter"/>
</dbReference>
<dbReference type="GO" id="GO:0005543">
    <property type="term" value="F:phospholipid binding"/>
    <property type="evidence" value="ECO:0007669"/>
    <property type="project" value="TreeGrafter"/>
</dbReference>
<dbReference type="GO" id="GO:0050482">
    <property type="term" value="P:arachidonate secretion"/>
    <property type="evidence" value="ECO:0007669"/>
    <property type="project" value="InterPro"/>
</dbReference>
<dbReference type="GO" id="GO:0016042">
    <property type="term" value="P:lipid catabolic process"/>
    <property type="evidence" value="ECO:0007669"/>
    <property type="project" value="UniProtKB-KW"/>
</dbReference>
<dbReference type="GO" id="GO:0042130">
    <property type="term" value="P:negative regulation of T cell proliferation"/>
    <property type="evidence" value="ECO:0007669"/>
    <property type="project" value="TreeGrafter"/>
</dbReference>
<dbReference type="GO" id="GO:0006644">
    <property type="term" value="P:phospholipid metabolic process"/>
    <property type="evidence" value="ECO:0007669"/>
    <property type="project" value="InterPro"/>
</dbReference>
<dbReference type="CDD" id="cd00125">
    <property type="entry name" value="PLA2c"/>
    <property type="match status" value="1"/>
</dbReference>
<dbReference type="FunFam" id="1.20.90.10:FF:000001">
    <property type="entry name" value="Basic phospholipase A2 homolog"/>
    <property type="match status" value="1"/>
</dbReference>
<dbReference type="Gene3D" id="1.20.90.10">
    <property type="entry name" value="Phospholipase A2 domain"/>
    <property type="match status" value="1"/>
</dbReference>
<dbReference type="InterPro" id="IPR001211">
    <property type="entry name" value="PLipase_A2"/>
</dbReference>
<dbReference type="InterPro" id="IPR033112">
    <property type="entry name" value="PLipase_A2_Asp_AS"/>
</dbReference>
<dbReference type="InterPro" id="IPR016090">
    <property type="entry name" value="PLipase_A2_dom"/>
</dbReference>
<dbReference type="InterPro" id="IPR036444">
    <property type="entry name" value="PLipase_A2_dom_sf"/>
</dbReference>
<dbReference type="InterPro" id="IPR033113">
    <property type="entry name" value="PLipase_A2_His_AS"/>
</dbReference>
<dbReference type="PANTHER" id="PTHR11716">
    <property type="entry name" value="PHOSPHOLIPASE A2 FAMILY MEMBER"/>
    <property type="match status" value="1"/>
</dbReference>
<dbReference type="PANTHER" id="PTHR11716:SF9">
    <property type="entry name" value="PHOSPHOLIPASE A2, MEMBRANE ASSOCIATED"/>
    <property type="match status" value="1"/>
</dbReference>
<dbReference type="Pfam" id="PF00068">
    <property type="entry name" value="Phospholip_A2_1"/>
    <property type="match status" value="1"/>
</dbReference>
<dbReference type="PRINTS" id="PR00389">
    <property type="entry name" value="PHPHLIPASEA2"/>
</dbReference>
<dbReference type="SMART" id="SM00085">
    <property type="entry name" value="PA2c"/>
    <property type="match status" value="1"/>
</dbReference>
<dbReference type="SUPFAM" id="SSF48619">
    <property type="entry name" value="Phospholipase A2, PLA2"/>
    <property type="match status" value="1"/>
</dbReference>
<dbReference type="PROSITE" id="PS00119">
    <property type="entry name" value="PA2_ASP"/>
    <property type="match status" value="1"/>
</dbReference>
<dbReference type="PROSITE" id="PS00118">
    <property type="entry name" value="PA2_HIS"/>
    <property type="match status" value="1"/>
</dbReference>
<organism>
    <name type="scientific">Craspedocephalus gramineus</name>
    <name type="common">Bamboo pit viper</name>
    <name type="synonym">Trimeresurus gramineus</name>
    <dbReference type="NCBI Taxonomy" id="8767"/>
    <lineage>
        <taxon>Eukaryota</taxon>
        <taxon>Metazoa</taxon>
        <taxon>Chordata</taxon>
        <taxon>Craniata</taxon>
        <taxon>Vertebrata</taxon>
        <taxon>Euteleostomi</taxon>
        <taxon>Lepidosauria</taxon>
        <taxon>Squamata</taxon>
        <taxon>Bifurcata</taxon>
        <taxon>Unidentata</taxon>
        <taxon>Episquamata</taxon>
        <taxon>Toxicofera</taxon>
        <taxon>Serpentes</taxon>
        <taxon>Colubroidea</taxon>
        <taxon>Viperidae</taxon>
        <taxon>Crotalinae</taxon>
        <taxon>Craspedocephalus</taxon>
    </lineage>
</organism>
<proteinExistence type="inferred from homology"/>
<comment type="function">
    <text>Snake venom phospholipase A2 (PLA2) that has high lipolytic activity. PLA2 catalyzes the calcium-dependent hydrolysis of the 2-acyl groups in 3-sn-phosphoglycerides.</text>
</comment>
<comment type="catalytic activity">
    <reaction evidence="2 3">
        <text>a 1,2-diacyl-sn-glycero-3-phosphocholine + H2O = a 1-acyl-sn-glycero-3-phosphocholine + a fatty acid + H(+)</text>
        <dbReference type="Rhea" id="RHEA:15801"/>
        <dbReference type="ChEBI" id="CHEBI:15377"/>
        <dbReference type="ChEBI" id="CHEBI:15378"/>
        <dbReference type="ChEBI" id="CHEBI:28868"/>
        <dbReference type="ChEBI" id="CHEBI:57643"/>
        <dbReference type="ChEBI" id="CHEBI:58168"/>
        <dbReference type="EC" id="3.1.1.4"/>
    </reaction>
</comment>
<comment type="cofactor">
    <cofactor evidence="1">
        <name>Ca(2+)</name>
        <dbReference type="ChEBI" id="CHEBI:29108"/>
    </cofactor>
    <text evidence="1">Binds 1 Ca(2+) ion per subunit.</text>
</comment>
<comment type="subunit">
    <text evidence="1">Homodimer.</text>
</comment>
<comment type="subcellular location">
    <subcellularLocation>
        <location>Secreted</location>
    </subcellularLocation>
</comment>
<comment type="tissue specificity">
    <text>Expressed by the venom gland.</text>
</comment>
<comment type="similarity">
    <text evidence="4">Belongs to the phospholipase A2 family. Group II subfamily. D49 sub-subfamily.</text>
</comment>